<organism>
    <name type="scientific">Thermus thermophilus (strain ATCC 27634 / DSM 579 / HB8)</name>
    <dbReference type="NCBI Taxonomy" id="300852"/>
    <lineage>
        <taxon>Bacteria</taxon>
        <taxon>Thermotogati</taxon>
        <taxon>Deinococcota</taxon>
        <taxon>Deinococci</taxon>
        <taxon>Thermales</taxon>
        <taxon>Thermaceae</taxon>
        <taxon>Thermus</taxon>
    </lineage>
</organism>
<name>Y319_THET8</name>
<reference key="1">
    <citation type="submission" date="2004-11" db="EMBL/GenBank/DDBJ databases">
        <title>Complete genome sequence of Thermus thermophilus HB8.</title>
        <authorList>
            <person name="Masui R."/>
            <person name="Kurokawa K."/>
            <person name="Nakagawa N."/>
            <person name="Tokunaga F."/>
            <person name="Koyama Y."/>
            <person name="Shibata T."/>
            <person name="Oshima T."/>
            <person name="Yokoyama S."/>
            <person name="Yasunaga T."/>
            <person name="Kuramitsu S."/>
        </authorList>
    </citation>
    <scope>NUCLEOTIDE SEQUENCE [LARGE SCALE GENOMIC DNA]</scope>
    <source>
        <strain>ATCC 27634 / DSM 579 / HB8</strain>
    </source>
</reference>
<feature type="chain" id="PRO_0000107781" description="Nucleotide-binding protein TTHA0319">
    <location>
        <begin position="1"/>
        <end position="273"/>
    </location>
</feature>
<feature type="binding site" evidence="1">
    <location>
        <begin position="8"/>
        <end position="15"/>
    </location>
    <ligand>
        <name>ATP</name>
        <dbReference type="ChEBI" id="CHEBI:30616"/>
    </ligand>
</feature>
<feature type="binding site" evidence="1">
    <location>
        <begin position="57"/>
        <end position="60"/>
    </location>
    <ligand>
        <name>GTP</name>
        <dbReference type="ChEBI" id="CHEBI:37565"/>
    </ligand>
</feature>
<dbReference type="EMBL" id="AP008226">
    <property type="protein sequence ID" value="BAD70142.1"/>
    <property type="molecule type" value="Genomic_DNA"/>
</dbReference>
<dbReference type="RefSeq" id="YP_143585.1">
    <property type="nucleotide sequence ID" value="NC_006461.1"/>
</dbReference>
<dbReference type="SMR" id="Q5SLH4"/>
<dbReference type="EnsemblBacteria" id="BAD70142">
    <property type="protein sequence ID" value="BAD70142"/>
    <property type="gene ID" value="BAD70142"/>
</dbReference>
<dbReference type="GeneID" id="3169643"/>
<dbReference type="KEGG" id="ttj:TTHA0319"/>
<dbReference type="PATRIC" id="fig|300852.9.peg.319"/>
<dbReference type="eggNOG" id="COG1660">
    <property type="taxonomic scope" value="Bacteria"/>
</dbReference>
<dbReference type="HOGENOM" id="CLU_059558_0_0_0"/>
<dbReference type="PhylomeDB" id="Q5SLH4"/>
<dbReference type="Proteomes" id="UP000000532">
    <property type="component" value="Chromosome"/>
</dbReference>
<dbReference type="GO" id="GO:0005524">
    <property type="term" value="F:ATP binding"/>
    <property type="evidence" value="ECO:0007669"/>
    <property type="project" value="UniProtKB-UniRule"/>
</dbReference>
<dbReference type="GO" id="GO:0005525">
    <property type="term" value="F:GTP binding"/>
    <property type="evidence" value="ECO:0007669"/>
    <property type="project" value="UniProtKB-UniRule"/>
</dbReference>
<dbReference type="Gene3D" id="3.40.50.300">
    <property type="entry name" value="P-loop containing nucleotide triphosphate hydrolases"/>
    <property type="match status" value="1"/>
</dbReference>
<dbReference type="HAMAP" id="MF_00636">
    <property type="entry name" value="RapZ_like"/>
    <property type="match status" value="1"/>
</dbReference>
<dbReference type="InterPro" id="IPR027417">
    <property type="entry name" value="P-loop_NTPase"/>
</dbReference>
<dbReference type="InterPro" id="IPR005337">
    <property type="entry name" value="RapZ-like"/>
</dbReference>
<dbReference type="InterPro" id="IPR053930">
    <property type="entry name" value="RapZ-like_N"/>
</dbReference>
<dbReference type="InterPro" id="IPR053931">
    <property type="entry name" value="RapZ_C"/>
</dbReference>
<dbReference type="NCBIfam" id="NF003828">
    <property type="entry name" value="PRK05416.1"/>
    <property type="match status" value="1"/>
</dbReference>
<dbReference type="PANTHER" id="PTHR30448">
    <property type="entry name" value="RNASE ADAPTER PROTEIN RAPZ"/>
    <property type="match status" value="1"/>
</dbReference>
<dbReference type="PANTHER" id="PTHR30448:SF0">
    <property type="entry name" value="RNASE ADAPTER PROTEIN RAPZ"/>
    <property type="match status" value="1"/>
</dbReference>
<dbReference type="Pfam" id="PF22740">
    <property type="entry name" value="PapZ_C"/>
    <property type="match status" value="1"/>
</dbReference>
<dbReference type="Pfam" id="PF03668">
    <property type="entry name" value="RapZ-like_N"/>
    <property type="match status" value="1"/>
</dbReference>
<dbReference type="PIRSF" id="PIRSF005052">
    <property type="entry name" value="P-loopkin"/>
    <property type="match status" value="1"/>
</dbReference>
<dbReference type="SUPFAM" id="SSF52540">
    <property type="entry name" value="P-loop containing nucleoside triphosphate hydrolases"/>
    <property type="match status" value="1"/>
</dbReference>
<comment type="function">
    <text evidence="1">Displays ATPase and GTPase activities.</text>
</comment>
<comment type="similarity">
    <text evidence="1">Belongs to the RapZ-like family.</text>
</comment>
<accession>Q5SLH4</accession>
<gene>
    <name type="ordered locus">TTHA0319</name>
</gene>
<keyword id="KW-0067">ATP-binding</keyword>
<keyword id="KW-0342">GTP-binding</keyword>
<keyword id="KW-0547">Nucleotide-binding</keyword>
<keyword id="KW-1185">Reference proteome</keyword>
<protein>
    <recommendedName>
        <fullName evidence="1">Nucleotide-binding protein TTHA0319</fullName>
    </recommendedName>
</protein>
<evidence type="ECO:0000255" key="1">
    <source>
        <dbReference type="HAMAP-Rule" id="MF_00636"/>
    </source>
</evidence>
<proteinExistence type="inferred from homology"/>
<sequence>MRFLVLTGLSGAGKTTARGFLEDLGYFMVDNLPPRLWLPLLQEAAARGLARVGVVVDARALAFFQDLEEVLEALRPTVVYLEARPEVLLRRYNLTRRVHPLGAGNLMREIAEERRALAGLRGRAHLVVDTSELSPRGLKEALARFLGEEGGFLLRLVSFGFKWGPPQEADLVLDVRPLPNPHYDPALRPRTGLDPEVRRYVFSEAAEPYYRALLAVAGLAAEGARAEGRAFYTVAVGCTGGRHRSVAVAERLAEELSGRFAVEVVHRDVEREG</sequence>